<gene>
    <name evidence="1" type="primary">def</name>
    <name type="ordered locus">SPA3273</name>
</gene>
<feature type="chain" id="PRO_0000301095" description="Peptide deformylase">
    <location>
        <begin position="1"/>
        <end position="169"/>
    </location>
</feature>
<feature type="active site" evidence="1">
    <location>
        <position position="134"/>
    </location>
</feature>
<feature type="binding site" evidence="1">
    <location>
        <position position="91"/>
    </location>
    <ligand>
        <name>Fe cation</name>
        <dbReference type="ChEBI" id="CHEBI:24875"/>
    </ligand>
</feature>
<feature type="binding site" evidence="1">
    <location>
        <position position="133"/>
    </location>
    <ligand>
        <name>Fe cation</name>
        <dbReference type="ChEBI" id="CHEBI:24875"/>
    </ligand>
</feature>
<feature type="binding site" evidence="1">
    <location>
        <position position="137"/>
    </location>
    <ligand>
        <name>Fe cation</name>
        <dbReference type="ChEBI" id="CHEBI:24875"/>
    </ligand>
</feature>
<organism>
    <name type="scientific">Salmonella paratyphi A (strain ATCC 9150 / SARB42)</name>
    <dbReference type="NCBI Taxonomy" id="295319"/>
    <lineage>
        <taxon>Bacteria</taxon>
        <taxon>Pseudomonadati</taxon>
        <taxon>Pseudomonadota</taxon>
        <taxon>Gammaproteobacteria</taxon>
        <taxon>Enterobacterales</taxon>
        <taxon>Enterobacteriaceae</taxon>
        <taxon>Salmonella</taxon>
    </lineage>
</organism>
<sequence length="169" mass="19282">MSVLQVLHIPDERLRKVAKPVEEVNAEIQRIVDDMFETMYAEEGIGLAATQVDIHQRIIVIDVSENRDERLVLINPELLEKSGETGIEEGCLSIPEQRALVPRAEKVKIRALDRDGNPFELEADGLLAICIQHEMDHLVGKLFIDYLSPLKQQRIRQKVEKLDRLNARA</sequence>
<keyword id="KW-0378">Hydrolase</keyword>
<keyword id="KW-0408">Iron</keyword>
<keyword id="KW-0479">Metal-binding</keyword>
<keyword id="KW-0648">Protein biosynthesis</keyword>
<accession>Q5PIT8</accession>
<evidence type="ECO:0000255" key="1">
    <source>
        <dbReference type="HAMAP-Rule" id="MF_00163"/>
    </source>
</evidence>
<proteinExistence type="inferred from homology"/>
<reference key="1">
    <citation type="journal article" date="2004" name="Nat. Genet.">
        <title>Comparison of genome degradation in Paratyphi A and Typhi, human-restricted serovars of Salmonella enterica that cause typhoid.</title>
        <authorList>
            <person name="McClelland M."/>
            <person name="Sanderson K.E."/>
            <person name="Clifton S.W."/>
            <person name="Latreille P."/>
            <person name="Porwollik S."/>
            <person name="Sabo A."/>
            <person name="Meyer R."/>
            <person name="Bieri T."/>
            <person name="Ozersky P."/>
            <person name="McLellan M."/>
            <person name="Harkins C.R."/>
            <person name="Wang C."/>
            <person name="Nguyen C."/>
            <person name="Berghoff A."/>
            <person name="Elliott G."/>
            <person name="Kohlberg S."/>
            <person name="Strong C."/>
            <person name="Du F."/>
            <person name="Carter J."/>
            <person name="Kremizki C."/>
            <person name="Layman D."/>
            <person name="Leonard S."/>
            <person name="Sun H."/>
            <person name="Fulton L."/>
            <person name="Nash W."/>
            <person name="Miner T."/>
            <person name="Minx P."/>
            <person name="Delehaunty K."/>
            <person name="Fronick C."/>
            <person name="Magrini V."/>
            <person name="Nhan M."/>
            <person name="Warren W."/>
            <person name="Florea L."/>
            <person name="Spieth J."/>
            <person name="Wilson R.K."/>
        </authorList>
    </citation>
    <scope>NUCLEOTIDE SEQUENCE [LARGE SCALE GENOMIC DNA]</scope>
    <source>
        <strain>ATCC 9150 / SARB42</strain>
    </source>
</reference>
<dbReference type="EC" id="3.5.1.88" evidence="1"/>
<dbReference type="EMBL" id="CP000026">
    <property type="protein sequence ID" value="AAV79089.1"/>
    <property type="molecule type" value="Genomic_DNA"/>
</dbReference>
<dbReference type="RefSeq" id="WP_000114987.1">
    <property type="nucleotide sequence ID" value="NC_006511.1"/>
</dbReference>
<dbReference type="SMR" id="Q5PIT8"/>
<dbReference type="KEGG" id="spt:SPA3273"/>
<dbReference type="HOGENOM" id="CLU_061901_2_1_6"/>
<dbReference type="Proteomes" id="UP000008185">
    <property type="component" value="Chromosome"/>
</dbReference>
<dbReference type="GO" id="GO:0046872">
    <property type="term" value="F:metal ion binding"/>
    <property type="evidence" value="ECO:0007669"/>
    <property type="project" value="UniProtKB-KW"/>
</dbReference>
<dbReference type="GO" id="GO:0042586">
    <property type="term" value="F:peptide deformylase activity"/>
    <property type="evidence" value="ECO:0007669"/>
    <property type="project" value="UniProtKB-UniRule"/>
</dbReference>
<dbReference type="GO" id="GO:0043686">
    <property type="term" value="P:co-translational protein modification"/>
    <property type="evidence" value="ECO:0007669"/>
    <property type="project" value="TreeGrafter"/>
</dbReference>
<dbReference type="GO" id="GO:0006412">
    <property type="term" value="P:translation"/>
    <property type="evidence" value="ECO:0007669"/>
    <property type="project" value="UniProtKB-UniRule"/>
</dbReference>
<dbReference type="CDD" id="cd00487">
    <property type="entry name" value="Pep_deformylase"/>
    <property type="match status" value="1"/>
</dbReference>
<dbReference type="FunFam" id="3.90.45.10:FF:000001">
    <property type="entry name" value="Peptide deformylase"/>
    <property type="match status" value="1"/>
</dbReference>
<dbReference type="Gene3D" id="3.90.45.10">
    <property type="entry name" value="Peptide deformylase"/>
    <property type="match status" value="1"/>
</dbReference>
<dbReference type="HAMAP" id="MF_00163">
    <property type="entry name" value="Pep_deformylase"/>
    <property type="match status" value="1"/>
</dbReference>
<dbReference type="InterPro" id="IPR023635">
    <property type="entry name" value="Peptide_deformylase"/>
</dbReference>
<dbReference type="InterPro" id="IPR036821">
    <property type="entry name" value="Peptide_deformylase_sf"/>
</dbReference>
<dbReference type="NCBIfam" id="TIGR00079">
    <property type="entry name" value="pept_deformyl"/>
    <property type="match status" value="1"/>
</dbReference>
<dbReference type="NCBIfam" id="NF001159">
    <property type="entry name" value="PRK00150.1-3"/>
    <property type="match status" value="1"/>
</dbReference>
<dbReference type="PANTHER" id="PTHR10458">
    <property type="entry name" value="PEPTIDE DEFORMYLASE"/>
    <property type="match status" value="1"/>
</dbReference>
<dbReference type="PANTHER" id="PTHR10458:SF21">
    <property type="entry name" value="PEPTIDE DEFORMYLASE"/>
    <property type="match status" value="1"/>
</dbReference>
<dbReference type="Pfam" id="PF01327">
    <property type="entry name" value="Pep_deformylase"/>
    <property type="match status" value="1"/>
</dbReference>
<dbReference type="PIRSF" id="PIRSF004749">
    <property type="entry name" value="Pep_def"/>
    <property type="match status" value="1"/>
</dbReference>
<dbReference type="PRINTS" id="PR01576">
    <property type="entry name" value="PDEFORMYLASE"/>
</dbReference>
<dbReference type="SUPFAM" id="SSF56420">
    <property type="entry name" value="Peptide deformylase"/>
    <property type="match status" value="1"/>
</dbReference>
<protein>
    <recommendedName>
        <fullName evidence="1">Peptide deformylase</fullName>
        <shortName evidence="1">PDF</shortName>
        <ecNumber evidence="1">3.5.1.88</ecNumber>
    </recommendedName>
    <alternativeName>
        <fullName evidence="1">Polypeptide deformylase</fullName>
    </alternativeName>
</protein>
<name>DEF_SALPA</name>
<comment type="function">
    <text evidence="1">Removes the formyl group from the N-terminal Met of newly synthesized proteins. Requires at least a dipeptide for an efficient rate of reaction. N-terminal L-methionine is a prerequisite for activity but the enzyme has broad specificity at other positions.</text>
</comment>
<comment type="catalytic activity">
    <reaction evidence="1">
        <text>N-terminal N-formyl-L-methionyl-[peptide] + H2O = N-terminal L-methionyl-[peptide] + formate</text>
        <dbReference type="Rhea" id="RHEA:24420"/>
        <dbReference type="Rhea" id="RHEA-COMP:10639"/>
        <dbReference type="Rhea" id="RHEA-COMP:10640"/>
        <dbReference type="ChEBI" id="CHEBI:15377"/>
        <dbReference type="ChEBI" id="CHEBI:15740"/>
        <dbReference type="ChEBI" id="CHEBI:49298"/>
        <dbReference type="ChEBI" id="CHEBI:64731"/>
        <dbReference type="EC" id="3.5.1.88"/>
    </reaction>
</comment>
<comment type="cofactor">
    <cofactor evidence="1">
        <name>Fe(2+)</name>
        <dbReference type="ChEBI" id="CHEBI:29033"/>
    </cofactor>
    <text evidence="1">Binds 1 Fe(2+) ion.</text>
</comment>
<comment type="similarity">
    <text evidence="1">Belongs to the polypeptide deformylase family.</text>
</comment>